<keyword id="KW-0067">ATP-binding</keyword>
<keyword id="KW-0963">Cytoplasm</keyword>
<keyword id="KW-0436">Ligase</keyword>
<keyword id="KW-0547">Nucleotide-binding</keyword>
<keyword id="KW-0658">Purine biosynthesis</keyword>
<protein>
    <recommendedName>
        <fullName>Phosphoribosylformylglycinamidine cyclo-ligase</fullName>
        <ecNumber>6.3.3.1</ecNumber>
    </recommendedName>
    <alternativeName>
        <fullName>AIR synthase</fullName>
    </alternativeName>
    <alternativeName>
        <fullName>AIRS</fullName>
    </alternativeName>
    <alternativeName>
        <fullName>Phosphoribosyl-aminoimidazole synthetase</fullName>
    </alternativeName>
</protein>
<organism>
    <name type="scientific">Leptospira interrogans serogroup Icterohaemorrhagiae serovar copenhageni (strain Fiocruz L1-130)</name>
    <dbReference type="NCBI Taxonomy" id="267671"/>
    <lineage>
        <taxon>Bacteria</taxon>
        <taxon>Pseudomonadati</taxon>
        <taxon>Spirochaetota</taxon>
        <taxon>Spirochaetia</taxon>
        <taxon>Leptospirales</taxon>
        <taxon>Leptospiraceae</taxon>
        <taxon>Leptospira</taxon>
    </lineage>
</organism>
<gene>
    <name type="primary">purM</name>
    <name type="ordered locus">LIC_11123</name>
</gene>
<feature type="chain" id="PRO_0000148219" description="Phosphoribosylformylglycinamidine cyclo-ligase">
    <location>
        <begin position="1"/>
        <end position="344"/>
    </location>
</feature>
<reference key="1">
    <citation type="journal article" date="2004" name="J. Bacteriol.">
        <title>Comparative genomics of two Leptospira interrogans serovars reveals novel insights into physiology and pathogenesis.</title>
        <authorList>
            <person name="Nascimento A.L.T.O."/>
            <person name="Ko A.I."/>
            <person name="Martins E.A.L."/>
            <person name="Monteiro-Vitorello C.B."/>
            <person name="Ho P.L."/>
            <person name="Haake D.A."/>
            <person name="Verjovski-Almeida S."/>
            <person name="Hartskeerl R.A."/>
            <person name="Marques M.V."/>
            <person name="Oliveira M.C."/>
            <person name="Menck C.F.M."/>
            <person name="Leite L.C.C."/>
            <person name="Carrer H."/>
            <person name="Coutinho L.L."/>
            <person name="Degrave W.M."/>
            <person name="Dellagostin O.A."/>
            <person name="El-Dorry H."/>
            <person name="Ferro E.S."/>
            <person name="Ferro M.I.T."/>
            <person name="Furlan L.R."/>
            <person name="Gamberini M."/>
            <person name="Giglioti E.A."/>
            <person name="Goes-Neto A."/>
            <person name="Goldman G.H."/>
            <person name="Goldman M.H.S."/>
            <person name="Harakava R."/>
            <person name="Jeronimo S.M.B."/>
            <person name="Junqueira-de-Azevedo I.L.M."/>
            <person name="Kimura E.T."/>
            <person name="Kuramae E.E."/>
            <person name="Lemos E.G.M."/>
            <person name="Lemos M.V.F."/>
            <person name="Marino C.L."/>
            <person name="Nunes L.R."/>
            <person name="de Oliveira R.C."/>
            <person name="Pereira G.G."/>
            <person name="Reis M.S."/>
            <person name="Schriefer A."/>
            <person name="Siqueira W.J."/>
            <person name="Sommer P."/>
            <person name="Tsai S.M."/>
            <person name="Simpson A.J.G."/>
            <person name="Ferro J.A."/>
            <person name="Camargo L.E.A."/>
            <person name="Kitajima J.P."/>
            <person name="Setubal J.C."/>
            <person name="Van Sluys M.A."/>
        </authorList>
    </citation>
    <scope>NUCLEOTIDE SEQUENCE [LARGE SCALE GENOMIC DNA]</scope>
    <source>
        <strain>Fiocruz L1-130</strain>
    </source>
</reference>
<accession>Q72T98</accession>
<comment type="catalytic activity">
    <reaction>
        <text>2-formamido-N(1)-(5-O-phospho-beta-D-ribosyl)acetamidine + ATP = 5-amino-1-(5-phospho-beta-D-ribosyl)imidazole + ADP + phosphate + H(+)</text>
        <dbReference type="Rhea" id="RHEA:23032"/>
        <dbReference type="ChEBI" id="CHEBI:15378"/>
        <dbReference type="ChEBI" id="CHEBI:30616"/>
        <dbReference type="ChEBI" id="CHEBI:43474"/>
        <dbReference type="ChEBI" id="CHEBI:137981"/>
        <dbReference type="ChEBI" id="CHEBI:147287"/>
        <dbReference type="ChEBI" id="CHEBI:456216"/>
        <dbReference type="EC" id="6.3.3.1"/>
    </reaction>
</comment>
<comment type="pathway">
    <text>Purine metabolism; IMP biosynthesis via de novo pathway; 5-amino-1-(5-phospho-D-ribosyl)imidazole from N(2)-formyl-N(1)-(5-phospho-D-ribosyl)glycinamide: step 2/2.</text>
</comment>
<comment type="subcellular location">
    <subcellularLocation>
        <location evidence="1">Cytoplasm</location>
    </subcellularLocation>
</comment>
<comment type="similarity">
    <text evidence="2">Belongs to the AIR synthase family.</text>
</comment>
<comment type="sequence caution" evidence="2">
    <conflict type="erroneous initiation">
        <sequence resource="EMBL-CDS" id="AAS69730"/>
    </conflict>
</comment>
<sequence>MEEKITYKNAGVDTEKGREFIQKIKRNVESTHGPRVIGGLGGFAGAYDVSVLKKYKHPILLSGTDGVGTKIELARLLKIYNTIGIDLVAMCVNDILVCGGEPFFFLDYIACGKLDPEKMDQIVSGIVQGCKMSNASLLGGETAEHPGTMKEDEFDLAGFVVGAVEKDSMIDGSTIRSGDKILGLESSGPHSNGFSLIRKLLLKEGKYLPTDPQQVKFLKDYALKPTRIYVSSILKLLQQVSVKGMVHITGGGYQENIPRILPQGTQSKFFKEKIPSGYFFEKIKKDHKIEELELFATFNMGIGYMVIVSEENAELAKKIMESSGEVVHEIGEIVSGNKEEVQFV</sequence>
<evidence type="ECO:0000250" key="1"/>
<evidence type="ECO:0000305" key="2"/>
<dbReference type="EC" id="6.3.3.1"/>
<dbReference type="EMBL" id="AE016823">
    <property type="protein sequence ID" value="AAS69730.1"/>
    <property type="status" value="ALT_INIT"/>
    <property type="molecule type" value="Genomic_DNA"/>
</dbReference>
<dbReference type="SMR" id="Q72T98"/>
<dbReference type="KEGG" id="lic:LIC_11123"/>
<dbReference type="HOGENOM" id="CLU_047116_0_0_12"/>
<dbReference type="UniPathway" id="UPA00074">
    <property type="reaction ID" value="UER00129"/>
</dbReference>
<dbReference type="Proteomes" id="UP000007037">
    <property type="component" value="Chromosome I"/>
</dbReference>
<dbReference type="GO" id="GO:0005829">
    <property type="term" value="C:cytosol"/>
    <property type="evidence" value="ECO:0007669"/>
    <property type="project" value="TreeGrafter"/>
</dbReference>
<dbReference type="GO" id="GO:0005524">
    <property type="term" value="F:ATP binding"/>
    <property type="evidence" value="ECO:0007669"/>
    <property type="project" value="UniProtKB-KW"/>
</dbReference>
<dbReference type="GO" id="GO:0004637">
    <property type="term" value="F:phosphoribosylamine-glycine ligase activity"/>
    <property type="evidence" value="ECO:0007669"/>
    <property type="project" value="TreeGrafter"/>
</dbReference>
<dbReference type="GO" id="GO:0004641">
    <property type="term" value="F:phosphoribosylformylglycinamidine cyclo-ligase activity"/>
    <property type="evidence" value="ECO:0007669"/>
    <property type="project" value="UniProtKB-UniRule"/>
</dbReference>
<dbReference type="GO" id="GO:0006189">
    <property type="term" value="P:'de novo' IMP biosynthetic process"/>
    <property type="evidence" value="ECO:0007669"/>
    <property type="project" value="UniProtKB-UniRule"/>
</dbReference>
<dbReference type="GO" id="GO:0046084">
    <property type="term" value="P:adenine biosynthetic process"/>
    <property type="evidence" value="ECO:0007669"/>
    <property type="project" value="TreeGrafter"/>
</dbReference>
<dbReference type="CDD" id="cd02196">
    <property type="entry name" value="PurM"/>
    <property type="match status" value="1"/>
</dbReference>
<dbReference type="FunFam" id="3.30.1330.10:FF:000001">
    <property type="entry name" value="Phosphoribosylformylglycinamidine cyclo-ligase"/>
    <property type="match status" value="1"/>
</dbReference>
<dbReference type="FunFam" id="3.90.650.10:FF:000011">
    <property type="entry name" value="Phosphoribosylformylglycinamidine cyclo-ligase"/>
    <property type="match status" value="1"/>
</dbReference>
<dbReference type="Gene3D" id="3.90.650.10">
    <property type="entry name" value="PurM-like C-terminal domain"/>
    <property type="match status" value="1"/>
</dbReference>
<dbReference type="Gene3D" id="3.30.1330.10">
    <property type="entry name" value="PurM-like, N-terminal domain"/>
    <property type="match status" value="1"/>
</dbReference>
<dbReference type="HAMAP" id="MF_00741">
    <property type="entry name" value="AIRS"/>
    <property type="match status" value="1"/>
</dbReference>
<dbReference type="InterPro" id="IPR010918">
    <property type="entry name" value="PurM-like_C_dom"/>
</dbReference>
<dbReference type="InterPro" id="IPR036676">
    <property type="entry name" value="PurM-like_C_sf"/>
</dbReference>
<dbReference type="InterPro" id="IPR016188">
    <property type="entry name" value="PurM-like_N"/>
</dbReference>
<dbReference type="InterPro" id="IPR036921">
    <property type="entry name" value="PurM-like_N_sf"/>
</dbReference>
<dbReference type="InterPro" id="IPR004733">
    <property type="entry name" value="PurM_cligase"/>
</dbReference>
<dbReference type="NCBIfam" id="TIGR00878">
    <property type="entry name" value="purM"/>
    <property type="match status" value="1"/>
</dbReference>
<dbReference type="PANTHER" id="PTHR10520:SF12">
    <property type="entry name" value="TRIFUNCTIONAL PURINE BIOSYNTHETIC PROTEIN ADENOSINE-3"/>
    <property type="match status" value="1"/>
</dbReference>
<dbReference type="PANTHER" id="PTHR10520">
    <property type="entry name" value="TRIFUNCTIONAL PURINE BIOSYNTHETIC PROTEIN ADENOSINE-3-RELATED"/>
    <property type="match status" value="1"/>
</dbReference>
<dbReference type="Pfam" id="PF00586">
    <property type="entry name" value="AIRS"/>
    <property type="match status" value="1"/>
</dbReference>
<dbReference type="Pfam" id="PF02769">
    <property type="entry name" value="AIRS_C"/>
    <property type="match status" value="1"/>
</dbReference>
<dbReference type="SUPFAM" id="SSF56042">
    <property type="entry name" value="PurM C-terminal domain-like"/>
    <property type="match status" value="1"/>
</dbReference>
<dbReference type="SUPFAM" id="SSF55326">
    <property type="entry name" value="PurM N-terminal domain-like"/>
    <property type="match status" value="1"/>
</dbReference>
<name>PUR5_LEPIC</name>
<proteinExistence type="inferred from homology"/>